<organism>
    <name type="scientific">Rattus norvegicus</name>
    <name type="common">Rat</name>
    <dbReference type="NCBI Taxonomy" id="10116"/>
    <lineage>
        <taxon>Eukaryota</taxon>
        <taxon>Metazoa</taxon>
        <taxon>Chordata</taxon>
        <taxon>Craniata</taxon>
        <taxon>Vertebrata</taxon>
        <taxon>Euteleostomi</taxon>
        <taxon>Mammalia</taxon>
        <taxon>Eutheria</taxon>
        <taxon>Euarchontoglires</taxon>
        <taxon>Glires</taxon>
        <taxon>Rodentia</taxon>
        <taxon>Myomorpha</taxon>
        <taxon>Muroidea</taxon>
        <taxon>Muridae</taxon>
        <taxon>Murinae</taxon>
        <taxon>Rattus</taxon>
    </lineage>
</organism>
<protein>
    <recommendedName>
        <fullName>Sister chromatid cohesion protein PDS5 homolog B</fullName>
    </recommendedName>
    <alternativeName>
        <fullName>Androgen-induced proliferation inhibitor</fullName>
    </alternativeName>
    <alternativeName>
        <fullName>Androgen-induced prostate proliferative shutoff-associated protein AS3</fullName>
    </alternativeName>
</protein>
<reference evidence="12" key="1">
    <citation type="journal article" date="2004" name="Nature">
        <title>Genome sequence of the Brown Norway rat yields insights into mammalian evolution.</title>
        <authorList>
            <person name="Gibbs R.A."/>
            <person name="Weinstock G.M."/>
            <person name="Metzker M.L."/>
            <person name="Muzny D.M."/>
            <person name="Sodergren E.J."/>
            <person name="Scherer S."/>
            <person name="Scott G."/>
            <person name="Steffen D."/>
            <person name="Worley K.C."/>
            <person name="Burch P.E."/>
            <person name="Okwuonu G."/>
            <person name="Hines S."/>
            <person name="Lewis L."/>
            <person name="Deramo C."/>
            <person name="Delgado O."/>
            <person name="Dugan-Rocha S."/>
            <person name="Miner G."/>
            <person name="Morgan M."/>
            <person name="Hawes A."/>
            <person name="Gill R."/>
            <person name="Holt R.A."/>
            <person name="Adams M.D."/>
            <person name="Amanatides P.G."/>
            <person name="Baden-Tillson H."/>
            <person name="Barnstead M."/>
            <person name="Chin S."/>
            <person name="Evans C.A."/>
            <person name="Ferriera S."/>
            <person name="Fosler C."/>
            <person name="Glodek A."/>
            <person name="Gu Z."/>
            <person name="Jennings D."/>
            <person name="Kraft C.L."/>
            <person name="Nguyen T."/>
            <person name="Pfannkoch C.M."/>
            <person name="Sitter C."/>
            <person name="Sutton G.G."/>
            <person name="Venter J.C."/>
            <person name="Woodage T."/>
            <person name="Smith D."/>
            <person name="Lee H.-M."/>
            <person name="Gustafson E."/>
            <person name="Cahill P."/>
            <person name="Kana A."/>
            <person name="Doucette-Stamm L."/>
            <person name="Weinstock K."/>
            <person name="Fechtel K."/>
            <person name="Weiss R.B."/>
            <person name="Dunn D.M."/>
            <person name="Green E.D."/>
            <person name="Blakesley R.W."/>
            <person name="Bouffard G.G."/>
            <person name="De Jong P.J."/>
            <person name="Osoegawa K."/>
            <person name="Zhu B."/>
            <person name="Marra M."/>
            <person name="Schein J."/>
            <person name="Bosdet I."/>
            <person name="Fjell C."/>
            <person name="Jones S."/>
            <person name="Krzywinski M."/>
            <person name="Mathewson C."/>
            <person name="Siddiqui A."/>
            <person name="Wye N."/>
            <person name="McPherson J."/>
            <person name="Zhao S."/>
            <person name="Fraser C.M."/>
            <person name="Shetty J."/>
            <person name="Shatsman S."/>
            <person name="Geer K."/>
            <person name="Chen Y."/>
            <person name="Abramzon S."/>
            <person name="Nierman W.C."/>
            <person name="Havlak P.H."/>
            <person name="Chen R."/>
            <person name="Durbin K.J."/>
            <person name="Egan A."/>
            <person name="Ren Y."/>
            <person name="Song X.-Z."/>
            <person name="Li B."/>
            <person name="Liu Y."/>
            <person name="Qin X."/>
            <person name="Cawley S."/>
            <person name="Cooney A.J."/>
            <person name="D'Souza L.M."/>
            <person name="Martin K."/>
            <person name="Wu J.Q."/>
            <person name="Gonzalez-Garay M.L."/>
            <person name="Jackson A.R."/>
            <person name="Kalafus K.J."/>
            <person name="McLeod M.P."/>
            <person name="Milosavljevic A."/>
            <person name="Virk D."/>
            <person name="Volkov A."/>
            <person name="Wheeler D.A."/>
            <person name="Zhang Z."/>
            <person name="Bailey J.A."/>
            <person name="Eichler E.E."/>
            <person name="Tuzun E."/>
            <person name="Birney E."/>
            <person name="Mongin E."/>
            <person name="Ureta-Vidal A."/>
            <person name="Woodwark C."/>
            <person name="Zdobnov E."/>
            <person name="Bork P."/>
            <person name="Suyama M."/>
            <person name="Torrents D."/>
            <person name="Alexandersson M."/>
            <person name="Trask B.J."/>
            <person name="Young J.M."/>
            <person name="Huang H."/>
            <person name="Wang H."/>
            <person name="Xing H."/>
            <person name="Daniels S."/>
            <person name="Gietzen D."/>
            <person name="Schmidt J."/>
            <person name="Stevens K."/>
            <person name="Vitt U."/>
            <person name="Wingrove J."/>
            <person name="Camara F."/>
            <person name="Mar Alba M."/>
            <person name="Abril J.F."/>
            <person name="Guigo R."/>
            <person name="Smit A."/>
            <person name="Dubchak I."/>
            <person name="Rubin E.M."/>
            <person name="Couronne O."/>
            <person name="Poliakov A."/>
            <person name="Huebner N."/>
            <person name="Ganten D."/>
            <person name="Goesele C."/>
            <person name="Hummel O."/>
            <person name="Kreitler T."/>
            <person name="Lee Y.-A."/>
            <person name="Monti J."/>
            <person name="Schulz H."/>
            <person name="Zimdahl H."/>
            <person name="Himmelbauer H."/>
            <person name="Lehrach H."/>
            <person name="Jacob H.J."/>
            <person name="Bromberg S."/>
            <person name="Gullings-Handley J."/>
            <person name="Jensen-Seaman M.I."/>
            <person name="Kwitek A.E."/>
            <person name="Lazar J."/>
            <person name="Pasko D."/>
            <person name="Tonellato P.J."/>
            <person name="Twigger S."/>
            <person name="Ponting C.P."/>
            <person name="Duarte J.M."/>
            <person name="Rice S."/>
            <person name="Goodstadt L."/>
            <person name="Beatson S.A."/>
            <person name="Emes R.D."/>
            <person name="Winter E.E."/>
            <person name="Webber C."/>
            <person name="Brandt P."/>
            <person name="Nyakatura G."/>
            <person name="Adetobi M."/>
            <person name="Chiaromonte F."/>
            <person name="Elnitski L."/>
            <person name="Eswara P."/>
            <person name="Hardison R.C."/>
            <person name="Hou M."/>
            <person name="Kolbe D."/>
            <person name="Makova K."/>
            <person name="Miller W."/>
            <person name="Nekrutenko A."/>
            <person name="Riemer C."/>
            <person name="Schwartz S."/>
            <person name="Taylor J."/>
            <person name="Yang S."/>
            <person name="Zhang Y."/>
            <person name="Lindpaintner K."/>
            <person name="Andrews T.D."/>
            <person name="Caccamo M."/>
            <person name="Clamp M."/>
            <person name="Clarke L."/>
            <person name="Curwen V."/>
            <person name="Durbin R.M."/>
            <person name="Eyras E."/>
            <person name="Searle S.M."/>
            <person name="Cooper G.M."/>
            <person name="Batzoglou S."/>
            <person name="Brudno M."/>
            <person name="Sidow A."/>
            <person name="Stone E.A."/>
            <person name="Payseur B.A."/>
            <person name="Bourque G."/>
            <person name="Lopez-Otin C."/>
            <person name="Puente X.S."/>
            <person name="Chakrabarti K."/>
            <person name="Chatterji S."/>
            <person name="Dewey C."/>
            <person name="Pachter L."/>
            <person name="Bray N."/>
            <person name="Yap V.B."/>
            <person name="Caspi A."/>
            <person name="Tesler G."/>
            <person name="Pevzner P.A."/>
            <person name="Haussler D."/>
            <person name="Roskin K.M."/>
            <person name="Baertsch R."/>
            <person name="Clawson H."/>
            <person name="Furey T.S."/>
            <person name="Hinrichs A.S."/>
            <person name="Karolchik D."/>
            <person name="Kent W.J."/>
            <person name="Rosenbloom K.R."/>
            <person name="Trumbower H."/>
            <person name="Weirauch M."/>
            <person name="Cooper D.N."/>
            <person name="Stenson P.D."/>
            <person name="Ma B."/>
            <person name="Brent M."/>
            <person name="Arumugam M."/>
            <person name="Shteynberg D."/>
            <person name="Copley R.R."/>
            <person name="Taylor M.S."/>
            <person name="Riethman H."/>
            <person name="Mudunuri U."/>
            <person name="Peterson J."/>
            <person name="Guyer M."/>
            <person name="Felsenfeld A."/>
            <person name="Old S."/>
            <person name="Mockrin S."/>
            <person name="Collins F.S."/>
        </authorList>
    </citation>
    <scope>NUCLEOTIDE SEQUENCE [LARGE SCALE GENOMIC DNA]</scope>
    <source>
        <strain evidence="7">Brown Norway</strain>
    </source>
</reference>
<reference evidence="12 13" key="2">
    <citation type="submission" date="2003-09" db="EMBL/GenBank/DDBJ databases">
        <title>Aprin expression in rat olfactory epithelium.</title>
        <authorList>
            <person name="Weiler E."/>
            <person name="Farbman A.I."/>
        </authorList>
    </citation>
    <scope>NUCLEOTIDE SEQUENCE [MRNA] OF 42-283</scope>
    <scope>NUCLEOTIDE SEQUENCE [MRNA] OF 1110-1378 (ISOFORM 1)</scope>
    <scope>NUCLEOTIDE SEQUENCE [MRNA] OF 1110-1264 (ISOFORM 3)</scope>
    <scope>NUCLEOTIDE SEQUENCE [GENOMIC DNA] OF 1327-1381 (ISOFORM 1)</scope>
    <scope>NUCLEOTIDE SEQUENCE [MRNA] OF 1334-1420 (ISOFORM 2)</scope>
    <source>
        <strain evidence="13">Sprague-Dawley</strain>
        <strain evidence="14">Wistar</strain>
        <tissue evidence="14">Liver</tissue>
        <tissue evidence="13">Testis</tissue>
    </source>
</reference>
<reference evidence="12" key="3">
    <citation type="journal article" date="1997" name="J. Steroid Biochem. Mol. Biol.">
        <title>Expression of novel genes linked to the androgen-induced, proliferative shutoff in prostate cancer cells.</title>
        <authorList>
            <person name="Geck P."/>
            <person name="Szelei J."/>
            <person name="Jimenez J."/>
            <person name="Lin T.-M."/>
            <person name="Sonnenschein C."/>
            <person name="Soto A.M."/>
        </authorList>
    </citation>
    <scope>TISSUE SPECIFICITY</scope>
</reference>
<reference evidence="12" key="4">
    <citation type="journal article" date="2002" name="Endocrinology">
        <title>Mechanism of androgen action on cell proliferation: AS3 protein as a mediator of proliferative arrest in the rat prostate.</title>
        <authorList>
            <person name="Maffini M.V."/>
            <person name="Geck P."/>
            <person name="Powell C.E."/>
            <person name="Sonnenschein C."/>
            <person name="Soto A.M."/>
        </authorList>
    </citation>
    <scope>FUNCTION</scope>
    <scope>SUBCELLULAR LOCATION</scope>
</reference>
<reference key="5">
    <citation type="journal article" date="2012" name="Nat. Commun.">
        <title>Quantitative maps of protein phosphorylation sites across 14 different rat organs and tissues.</title>
        <authorList>
            <person name="Lundby A."/>
            <person name="Secher A."/>
            <person name="Lage K."/>
            <person name="Nordsborg N.B."/>
            <person name="Dmytriyev A."/>
            <person name="Lundby C."/>
            <person name="Olsen J.V."/>
        </authorList>
    </citation>
    <scope>PHOSPHORYLATION [LARGE SCALE ANALYSIS] AT SER-1162; SER-1166; SER-1221; SER-1257; SER-1283; SER-1357 AND THR-1369</scope>
    <scope>IDENTIFICATION BY MASS SPECTROMETRY [LARGE SCALE ANALYSIS]</scope>
</reference>
<proteinExistence type="evidence at protein level"/>
<accession>Q6TRW4</accession>
<accession>Q5G5U1</accession>
<accession>Q5G6V7</accession>
<accession>Q5G6V8</accession>
<accession>Q5PY35</accession>
<accession>Q5PY36</accession>
<comment type="function">
    <text evidence="6">Regulator of sister chromatid cohesion in mitosis which may stabilize cohesin complex association with chromatin. May couple sister chromatid cohesion during mitosis to DNA replication. Cohesion ensures that chromosome partitioning is accurate in both meiotic and mitotic cells and plays an important role in DNA repair. Plays a role in androgen-induced proliferative arrest in prostate cells.</text>
</comment>
<comment type="subunit">
    <text evidence="1">Interacts with the cohesin complex. Interacts with RAD21; the interaction is direct. Interacts with WAPL (via FGF motifs) or CDCA5 (via the FGF motif); the interaction is direct, cohesin-dependent and competitive (By similarity).</text>
</comment>
<comment type="subcellular location">
    <subcellularLocation>
        <location evidence="6">Nucleus</location>
    </subcellularLocation>
</comment>
<comment type="alternative products">
    <event type="alternative splicing"/>
    <isoform>
        <id>Q6TRW4-1</id>
        <name evidence="7">1</name>
        <sequence type="displayed"/>
    </isoform>
    <isoform>
        <id>Q6TRW4-2</id>
        <name evidence="9">2</name>
        <sequence type="described" ref="VSP_052408"/>
    </isoform>
    <isoform>
        <id>Q6TRW4-3</id>
        <name evidence="9">3</name>
        <sequence type="described" ref="VSP_052407"/>
    </isoform>
</comment>
<comment type="tissue specificity">
    <text evidence="8">Highly expressed in intact prostate with levels decreasing after castration. Expressed exclusively in prostate cells inhibited from proliferating by long-term androgen exposure.</text>
</comment>
<comment type="similarity">
    <text evidence="12">Belongs to the PDS5 family.</text>
</comment>
<evidence type="ECO:0000250" key="1"/>
<evidence type="ECO:0000250" key="2">
    <source>
        <dbReference type="UniProtKB" id="Q4VA53"/>
    </source>
</evidence>
<evidence type="ECO:0000250" key="3">
    <source>
        <dbReference type="UniProtKB" id="Q9NTI5"/>
    </source>
</evidence>
<evidence type="ECO:0000255" key="4"/>
<evidence type="ECO:0000256" key="5">
    <source>
        <dbReference type="SAM" id="MobiDB-lite"/>
    </source>
</evidence>
<evidence type="ECO:0000269" key="6">
    <source>
    </source>
</evidence>
<evidence type="ECO:0000269" key="7">
    <source>
    </source>
</evidence>
<evidence type="ECO:0000269" key="8">
    <source>
    </source>
</evidence>
<evidence type="ECO:0000269" key="9">
    <source ref="2"/>
</evidence>
<evidence type="ECO:0000303" key="10">
    <source>
    </source>
</evidence>
<evidence type="ECO:0000303" key="11">
    <source ref="2"/>
</evidence>
<evidence type="ECO:0000305" key="12"/>
<evidence type="ECO:0000312" key="13">
    <source>
        <dbReference type="EMBL" id="AAQ91374.1"/>
    </source>
</evidence>
<evidence type="ECO:0000312" key="14">
    <source>
        <dbReference type="EMBL" id="AAW69306.1"/>
    </source>
</evidence>
<evidence type="ECO:0007744" key="15">
    <source>
    </source>
</evidence>
<sequence>MAHSKTRTNDGKITYPPGVKEISDKISKEEMVRRLKMVVKTFMDMDQDSEEEKELYLNLALHLASDFFLKHPDKDVRLLVACCLADIFRIYAPEAPYTSPDKLKDIFMFITRQLKGLEDTKSPQFNRYFYLLENIAWVKSYNICFELEDSNEIFTQLYRTLFSVINNGHNQKVHMHMVDLMSSIICEGDTVSQELLDTVLVNLVPAHKNLNKQAYDLAKALLKRTAQAIEPYITNFFNQVLMLGKTSISDLSEHVFDLILELYNIDSHLLLSVLPQLEFKLKSNDNEERLQVVKLLAKMFGAKDSELASQNKPLWQCYLGRFNDIHVPIRLECVKFASHCLMNHPDLAKDLTEYLKVRSHDPEEAIRHDVIVSIVTAAKKDILLVNDHLLNFVRERTLDKRWRVRKEAMMGLAQIYKKYALQSAAGKDAAKQICWVKDKLLHIYYQNSIDDRLLVERIFAQYMVPHNLETTERMKCLYYLYATLDLNAVKALNEMWKCQNLLRHQVKDLLDLIKQPKTDASVKAIFSKVMVITRNLPDPGKAQDFMKKFTQVLEDDEKIRKQLEALVSPTCSCKQAEGCVREITKKLGNPKQPTNPFLEMIKFLLERIAPVHIDTESISALIKQVNKSIDGTADDEDEGVPTDQAIRAGLELLKVLSFTHPISFHSAETFESLLACLKMDDEKVAEAALQIFKNTGSKIEEDFPHIRSALLPVLHHKSKKGPPRQAKYAIHCIHAIFSSKETQFAQIFEPLHKSLDPSNLEHLITPLVTIGHIALLAPDQFAAPLKSLVATFIVKDLLMNDRLPGKKTTKLWVPDEEVSPETMVKIQAIKMMVRWLLGMKNNHSKSGTSTLRLLTTILHSDGDLTEQGKISKPDMSRLRLAAGSAIVKLAQEPCYHEIITLEQYQLCALAINDECYQVRQVFAQKLHKGLSRLRLPLEYMAICALCAKDPVKERRAHARQCLVKNITVRREYLKQHAAVSEKLLSLLPEYVVPYTIHLLAHDPDYVKVQDIEQLKDVKECLWFVLEILMAKNENNSHAFIRKMVENIKQTKDAQGPDDTKMNEKLYTVCDVAMNIIMSKSTTYSLESPKDPVLPARFFTQPDKNFSNTKNYLPPEMKSFFTPGKPKTANVLGAVNKPLSSAGKQSQTKSSRMETVSNASSSSNPSSPGRIKGRLDSTEMDHSENEDYTMSSPLPGKKSDKREDSDLVRSELEKPRSRKKASVTDPEEKLGMDDLSKLVQEQKPKGSQRGRKRGHAASESEEQQWPEEKRHKEELLGNEDEQNSPPKKGKRGRPPKPLGGTSKEEPVVKTSKKGNKKKPAPPVVDEDEEEERQMGNTEQKSKSKQQRTSKRAQQRAESPETSAVESTQSTPQKGRGRPSKTPSPSQPKKNIRVGRSKQVATKENDSSEEMDVLQASSPVSDDTTQEGAEEEDISAGNVRRRSSKRERR</sequence>
<dbReference type="EMBL" id="AABR03082233">
    <property type="status" value="NOT_ANNOTATED_CDS"/>
    <property type="molecule type" value="Genomic_DNA"/>
</dbReference>
<dbReference type="EMBL" id="AABR03082545">
    <property type="status" value="NOT_ANNOTATED_CDS"/>
    <property type="molecule type" value="Genomic_DNA"/>
</dbReference>
<dbReference type="EMBL" id="AY388627">
    <property type="protein sequence ID" value="AAQ91374.1"/>
    <property type="molecule type" value="mRNA"/>
</dbReference>
<dbReference type="EMBL" id="AY820182">
    <property type="protein sequence ID" value="AAV68352.1"/>
    <property type="molecule type" value="mRNA"/>
</dbReference>
<dbReference type="EMBL" id="AY820183">
    <property type="protein sequence ID" value="AAV68353.1"/>
    <property type="molecule type" value="mRNA"/>
</dbReference>
<dbReference type="EMBL" id="AY831451">
    <property type="protein sequence ID" value="AAW69306.1"/>
    <property type="molecule type" value="Genomic_DNA"/>
</dbReference>
<dbReference type="EMBL" id="AY831452">
    <property type="protein sequence ID" value="AAW69307.1"/>
    <property type="molecule type" value="mRNA"/>
</dbReference>
<dbReference type="EMBL" id="AY836673">
    <property type="protein sequence ID" value="AAW69308.1"/>
    <property type="molecule type" value="mRNA"/>
</dbReference>
<dbReference type="RefSeq" id="XP_038945247.1">
    <molecule id="Q6TRW4-1"/>
    <property type="nucleotide sequence ID" value="XM_039089319.1"/>
</dbReference>
<dbReference type="RefSeq" id="XP_038945249.1">
    <molecule id="Q6TRW4-3"/>
    <property type="nucleotide sequence ID" value="XM_039089321.1"/>
</dbReference>
<dbReference type="RefSeq" id="XP_038945253.1">
    <molecule id="Q6TRW4-2"/>
    <property type="nucleotide sequence ID" value="XM_039089325.1"/>
</dbReference>
<dbReference type="SMR" id="Q6TRW4"/>
<dbReference type="FunCoup" id="Q6TRW4">
    <property type="interactions" value="4020"/>
</dbReference>
<dbReference type="STRING" id="10116.ENSRNOP00000063199"/>
<dbReference type="iPTMnet" id="Q6TRW4"/>
<dbReference type="PhosphoSitePlus" id="Q6TRW4"/>
<dbReference type="PaxDb" id="10116-ENSRNOP00000063199"/>
<dbReference type="PeptideAtlas" id="Q6TRW4"/>
<dbReference type="GeneID" id="304218"/>
<dbReference type="UCSC" id="RGD:1310838">
    <molecule id="Q6TRW4-1"/>
    <property type="organism name" value="rat"/>
</dbReference>
<dbReference type="AGR" id="RGD:1310838"/>
<dbReference type="RGD" id="1310838">
    <property type="gene designation" value="Pds5b"/>
</dbReference>
<dbReference type="eggNOG" id="KOG1525">
    <property type="taxonomic scope" value="Eukaryota"/>
</dbReference>
<dbReference type="InParanoid" id="Q6TRW4"/>
<dbReference type="Reactome" id="R-RNO-2467813">
    <property type="pathway name" value="Separation of Sister Chromatids"/>
</dbReference>
<dbReference type="Reactome" id="R-RNO-2468052">
    <property type="pathway name" value="Establishment of Sister Chromatid Cohesion"/>
</dbReference>
<dbReference type="Reactome" id="R-RNO-2470946">
    <property type="pathway name" value="Cohesin Loading onto Chromatin"/>
</dbReference>
<dbReference type="Reactome" id="R-RNO-2500257">
    <property type="pathway name" value="Resolution of Sister Chromatid Cohesion"/>
</dbReference>
<dbReference type="PRO" id="PR:Q6TRW4"/>
<dbReference type="Proteomes" id="UP000002494">
    <property type="component" value="Unplaced"/>
</dbReference>
<dbReference type="GO" id="GO:0000785">
    <property type="term" value="C:chromatin"/>
    <property type="evidence" value="ECO:0000266"/>
    <property type="project" value="RGD"/>
</dbReference>
<dbReference type="GO" id="GO:0005634">
    <property type="term" value="C:nucleus"/>
    <property type="evidence" value="ECO:0000314"/>
    <property type="project" value="UniProtKB"/>
</dbReference>
<dbReference type="GO" id="GO:0003677">
    <property type="term" value="F:DNA binding"/>
    <property type="evidence" value="ECO:0000266"/>
    <property type="project" value="RGD"/>
</dbReference>
<dbReference type="GO" id="GO:0051301">
    <property type="term" value="P:cell division"/>
    <property type="evidence" value="ECO:0007669"/>
    <property type="project" value="UniProtKB-KW"/>
</dbReference>
<dbReference type="GO" id="GO:0006281">
    <property type="term" value="P:DNA repair"/>
    <property type="evidence" value="ECO:0000318"/>
    <property type="project" value="GO_Central"/>
</dbReference>
<dbReference type="GO" id="GO:0002088">
    <property type="term" value="P:lens development in camera-type eye"/>
    <property type="evidence" value="ECO:0000266"/>
    <property type="project" value="RGD"/>
</dbReference>
<dbReference type="GO" id="GO:0007064">
    <property type="term" value="P:mitotic sister chromatid cohesion"/>
    <property type="evidence" value="ECO:0000250"/>
    <property type="project" value="UniProtKB"/>
</dbReference>
<dbReference type="GO" id="GO:0008285">
    <property type="term" value="P:negative regulation of cell population proliferation"/>
    <property type="evidence" value="ECO:0000314"/>
    <property type="project" value="UniProtKB"/>
</dbReference>
<dbReference type="GO" id="GO:0042127">
    <property type="term" value="P:regulation of cell population proliferation"/>
    <property type="evidence" value="ECO:0000266"/>
    <property type="project" value="RGD"/>
</dbReference>
<dbReference type="CDD" id="cd19953">
    <property type="entry name" value="PDS5"/>
    <property type="match status" value="1"/>
</dbReference>
<dbReference type="FunFam" id="1.25.10.10:FF:001146">
    <property type="entry name" value="PDS5 cohesin associated factor B"/>
    <property type="match status" value="1"/>
</dbReference>
<dbReference type="FunFam" id="1.25.10.10:FF:000064">
    <property type="entry name" value="Sister chromatid cohesion protein PDS5 homolog A"/>
    <property type="match status" value="1"/>
</dbReference>
<dbReference type="Gene3D" id="1.25.10.10">
    <property type="entry name" value="Leucine-rich Repeat Variant"/>
    <property type="match status" value="2"/>
</dbReference>
<dbReference type="InterPro" id="IPR011989">
    <property type="entry name" value="ARM-like"/>
</dbReference>
<dbReference type="InterPro" id="IPR016024">
    <property type="entry name" value="ARM-type_fold"/>
</dbReference>
<dbReference type="InterPro" id="IPR039776">
    <property type="entry name" value="Pds5"/>
</dbReference>
<dbReference type="PANTHER" id="PTHR12663">
    <property type="entry name" value="ANDROGEN INDUCED INHIBITOR OF PROLIFERATION AS3 / PDS5-RELATED"/>
    <property type="match status" value="1"/>
</dbReference>
<dbReference type="PANTHER" id="PTHR12663:SF1">
    <property type="entry name" value="SISTER CHROMATID COHESION PROTEIN PDS5 HOMOLOG B"/>
    <property type="match status" value="1"/>
</dbReference>
<dbReference type="Pfam" id="PF20168">
    <property type="entry name" value="PDS5"/>
    <property type="match status" value="1"/>
</dbReference>
<dbReference type="SUPFAM" id="SSF48371">
    <property type="entry name" value="ARM repeat"/>
    <property type="match status" value="1"/>
</dbReference>
<name>PDS5B_RAT</name>
<keyword id="KW-0007">Acetylation</keyword>
<keyword id="KW-0025">Alternative splicing</keyword>
<keyword id="KW-0131">Cell cycle</keyword>
<keyword id="KW-0132">Cell division</keyword>
<keyword id="KW-0498">Mitosis</keyword>
<keyword id="KW-0539">Nucleus</keyword>
<keyword id="KW-0597">Phosphoprotein</keyword>
<keyword id="KW-1185">Reference proteome</keyword>
<keyword id="KW-0677">Repeat</keyword>
<feature type="chain" id="PRO_0000287426" description="Sister chromatid cohesion protein PDS5 homolog B">
    <location>
        <begin position="1"/>
        <end position="1447"/>
    </location>
</feature>
<feature type="repeat" description="HEAT" evidence="4">
    <location>
        <begin position="383"/>
        <end position="419"/>
    </location>
</feature>
<feature type="DNA-binding region" description="A.T hook 1" evidence="4">
    <location>
        <begin position="1247"/>
        <end position="1259"/>
    </location>
</feature>
<feature type="DNA-binding region" description="A.T hook 2" evidence="4">
    <location>
        <begin position="1287"/>
        <end position="1299"/>
    </location>
</feature>
<feature type="DNA-binding region" description="A.T hook 3" evidence="4">
    <location>
        <begin position="1371"/>
        <end position="1383"/>
    </location>
</feature>
<feature type="region of interest" description="Disordered" evidence="5">
    <location>
        <begin position="1137"/>
        <end position="1447"/>
    </location>
</feature>
<feature type="compositionally biased region" description="Polar residues" evidence="5">
    <location>
        <begin position="1137"/>
        <end position="1155"/>
    </location>
</feature>
<feature type="compositionally biased region" description="Low complexity" evidence="5">
    <location>
        <begin position="1156"/>
        <end position="1167"/>
    </location>
</feature>
<feature type="compositionally biased region" description="Basic and acidic residues" evidence="5">
    <location>
        <begin position="1172"/>
        <end position="1184"/>
    </location>
</feature>
<feature type="compositionally biased region" description="Basic and acidic residues" evidence="5">
    <location>
        <begin position="1196"/>
        <end position="1214"/>
    </location>
</feature>
<feature type="compositionally biased region" description="Basic and acidic residues" evidence="5">
    <location>
        <begin position="1225"/>
        <end position="1243"/>
    </location>
</feature>
<feature type="compositionally biased region" description="Basic residues" evidence="5">
    <location>
        <begin position="1245"/>
        <end position="1254"/>
    </location>
</feature>
<feature type="compositionally biased region" description="Basic and acidic residues" evidence="5">
    <location>
        <begin position="1265"/>
        <end position="1274"/>
    </location>
</feature>
<feature type="compositionally biased region" description="Basic residues" evidence="5">
    <location>
        <begin position="1309"/>
        <end position="1318"/>
    </location>
</feature>
<feature type="compositionally biased region" description="Basic residues" evidence="5">
    <location>
        <begin position="1341"/>
        <end position="1352"/>
    </location>
</feature>
<feature type="compositionally biased region" description="Polar residues" evidence="5">
    <location>
        <begin position="1358"/>
        <end position="1371"/>
    </location>
</feature>
<feature type="compositionally biased region" description="Low complexity" evidence="5">
    <location>
        <begin position="1378"/>
        <end position="1387"/>
    </location>
</feature>
<feature type="compositionally biased region" description="Acidic residues" evidence="5">
    <location>
        <begin position="1422"/>
        <end position="1432"/>
    </location>
</feature>
<feature type="compositionally biased region" description="Basic residues" evidence="5">
    <location>
        <begin position="1437"/>
        <end position="1447"/>
    </location>
</feature>
<feature type="modified residue" description="N6-acetyllysine" evidence="3">
    <location>
        <position position="1136"/>
    </location>
</feature>
<feature type="modified residue" description="Phosphoserine" evidence="3">
    <location>
        <position position="1140"/>
    </location>
</feature>
<feature type="modified residue" description="Phosphoserine" evidence="15">
    <location>
        <position position="1162"/>
    </location>
</feature>
<feature type="modified residue" description="Phosphoserine" evidence="15">
    <location>
        <position position="1166"/>
    </location>
</feature>
<feature type="modified residue" description="Phosphoserine" evidence="3">
    <location>
        <position position="1176"/>
    </location>
</feature>
<feature type="modified residue" description="Phosphoserine" evidence="3">
    <location>
        <position position="1182"/>
    </location>
</feature>
<feature type="modified residue" description="Phosphoserine" evidence="3">
    <location>
        <position position="1191"/>
    </location>
</feature>
<feature type="modified residue" description="Phosphoserine" evidence="15">
    <location>
        <position position="1221"/>
    </location>
</feature>
<feature type="modified residue" description="Phosphoserine" evidence="15">
    <location>
        <position position="1257"/>
    </location>
</feature>
<feature type="modified residue" description="Phosphoserine" evidence="3">
    <location>
        <position position="1259"/>
    </location>
</feature>
<feature type="modified residue" description="Phosphoserine" evidence="15">
    <location>
        <position position="1283"/>
    </location>
</feature>
<feature type="modified residue" description="Phosphoserine" evidence="15">
    <location>
        <position position="1357"/>
    </location>
</feature>
<feature type="modified residue" description="Phosphoserine" evidence="2">
    <location>
        <position position="1365"/>
    </location>
</feature>
<feature type="modified residue" description="Phosphothreonine" evidence="3">
    <location>
        <position position="1366"/>
    </location>
</feature>
<feature type="modified residue" description="Phosphoserine" evidence="2">
    <location>
        <position position="1368"/>
    </location>
</feature>
<feature type="modified residue" description="Phosphothreonine" evidence="15">
    <location>
        <position position="1369"/>
    </location>
</feature>
<feature type="modified residue" description="Phosphothreonine" evidence="3">
    <location>
        <position position="1380"/>
    </location>
</feature>
<feature type="modified residue" description="Phosphoserine" evidence="3">
    <location>
        <position position="1382"/>
    </location>
</feature>
<feature type="modified residue" description="Phosphoserine" evidence="2">
    <location>
        <position position="1416"/>
    </location>
</feature>
<feature type="modified residue" description="Phosphoserine" evidence="2">
    <location>
        <position position="1419"/>
    </location>
</feature>
<feature type="splice variant" id="VSP_052407" description="In isoform 3." evidence="11">
    <location>
        <begin position="1207"/>
        <end position="1208"/>
    </location>
</feature>
<feature type="splice variant" id="VSP_052408" description="In isoform 2." evidence="11">
    <original>RAESPETSAVESTQSTPQKGRGRPSKTPSPSQPKKNI</original>
    <variation>S</variation>
    <location>
        <begin position="1354"/>
        <end position="1390"/>
    </location>
</feature>
<gene>
    <name type="primary">Pds5b</name>
    <name type="synonym">Aprin</name>
    <name evidence="10" type="synonym">As3</name>
</gene>